<protein>
    <recommendedName>
        <fullName>Sulfite reductase [ferredoxin]</fullName>
        <ecNumber evidence="2">1.8.7.1</ecNumber>
    </recommendedName>
</protein>
<comment type="function">
    <text evidence="2">Catalyzes the reduction of sulfite to sulfide, a step in the biosynthesis of sulfur-containing amino acids and cofactors.</text>
</comment>
<comment type="catalytic activity">
    <reaction evidence="2">
        <text>hydrogen sulfide + 6 oxidized [2Fe-2S]-[ferredoxin] + 3 H2O = sulfite + 6 reduced [2Fe-2S]-[ferredoxin] + 7 H(+)</text>
        <dbReference type="Rhea" id="RHEA:23132"/>
        <dbReference type="Rhea" id="RHEA-COMP:10000"/>
        <dbReference type="Rhea" id="RHEA-COMP:10001"/>
        <dbReference type="ChEBI" id="CHEBI:15377"/>
        <dbReference type="ChEBI" id="CHEBI:15378"/>
        <dbReference type="ChEBI" id="CHEBI:17359"/>
        <dbReference type="ChEBI" id="CHEBI:29919"/>
        <dbReference type="ChEBI" id="CHEBI:33737"/>
        <dbReference type="ChEBI" id="CHEBI:33738"/>
        <dbReference type="EC" id="1.8.7.1"/>
    </reaction>
</comment>
<comment type="cofactor">
    <cofactor evidence="2">
        <name>siroheme</name>
        <dbReference type="ChEBI" id="CHEBI:60052"/>
    </cofactor>
    <text evidence="2">Binds 1 siroheme per subunit.</text>
</comment>
<comment type="cofactor">
    <cofactor evidence="2">
        <name>[4Fe-4S] cluster</name>
        <dbReference type="ChEBI" id="CHEBI:49883"/>
    </cofactor>
    <text evidence="2">Binds 1 [4Fe-4S] cluster per subunit.</text>
</comment>
<comment type="subunit">
    <text evidence="2">Monomer.</text>
</comment>
<comment type="miscellaneous">
    <text>Was identified as a high-confidence drug target.</text>
</comment>
<comment type="similarity">
    <text evidence="3">Belongs to the nitrite and sulfite reductase 4Fe-4S domain family.</text>
</comment>
<comment type="sequence caution" evidence="3">
    <conflict type="erroneous initiation">
        <sequence resource="EMBL-CDS" id="CCP45179"/>
    </conflict>
    <text>Extended N-terminus.</text>
</comment>
<proteinExistence type="evidence at protein level"/>
<feature type="chain" id="PRO_0000199952" description="Sulfite reductase [ferredoxin]">
    <location>
        <begin position="1"/>
        <end position="555"/>
    </location>
</feature>
<feature type="region of interest" description="Disordered" evidence="1">
    <location>
        <begin position="1"/>
        <end position="22"/>
    </location>
</feature>
<feature type="binding site">
    <location>
        <position position="417"/>
    </location>
    <ligand>
        <name>[4Fe-4S] cluster</name>
        <dbReference type="ChEBI" id="CHEBI:49883"/>
    </ligand>
</feature>
<feature type="binding site">
    <location>
        <position position="423"/>
    </location>
    <ligand>
        <name>[4Fe-4S] cluster</name>
        <dbReference type="ChEBI" id="CHEBI:49883"/>
    </ligand>
</feature>
<feature type="binding site">
    <location>
        <position position="463"/>
    </location>
    <ligand>
        <name>[4Fe-4S] cluster</name>
        <dbReference type="ChEBI" id="CHEBI:49883"/>
    </ligand>
</feature>
<feature type="binding site">
    <location>
        <position position="467"/>
    </location>
    <ligand>
        <name>[4Fe-4S] cluster</name>
        <dbReference type="ChEBI" id="CHEBI:49883"/>
    </ligand>
</feature>
<feature type="binding site" description="axial binding residue">
    <location>
        <position position="467"/>
    </location>
    <ligand>
        <name>siroheme</name>
        <dbReference type="ChEBI" id="CHEBI:60052"/>
    </ligand>
    <ligandPart>
        <name>Fe</name>
        <dbReference type="ChEBI" id="CHEBI:18248"/>
    </ligandPart>
</feature>
<feature type="cross-link" description="3'-(S-cysteinyl)-tyrosine (Tyr-Cys)">
    <location>
        <begin position="69"/>
        <end position="161"/>
    </location>
</feature>
<feature type="mutagenesis site" description="Strong decrease in activity." evidence="2">
    <original>Y</original>
    <variation>A</variation>
    <variation>F</variation>
    <location>
        <position position="69"/>
    </location>
</feature>
<feature type="mutagenesis site" description="Strong decrease in activity." evidence="2">
    <original>C</original>
    <variation>A</variation>
    <variation>S</variation>
    <location>
        <position position="161"/>
    </location>
</feature>
<feature type="helix" evidence="4">
    <location>
        <begin position="15"/>
        <end position="17"/>
    </location>
</feature>
<feature type="helix" evidence="4">
    <location>
        <begin position="25"/>
        <end position="29"/>
    </location>
</feature>
<feature type="helix" evidence="4">
    <location>
        <begin position="30"/>
        <end position="32"/>
    </location>
</feature>
<feature type="helix" evidence="4">
    <location>
        <begin position="35"/>
        <end position="37"/>
    </location>
</feature>
<feature type="helix" evidence="4">
    <location>
        <begin position="38"/>
        <end position="44"/>
    </location>
</feature>
<feature type="helix" evidence="4">
    <location>
        <begin position="46"/>
        <end position="49"/>
    </location>
</feature>
<feature type="helix" evidence="4">
    <location>
        <begin position="51"/>
        <end position="53"/>
    </location>
</feature>
<feature type="helix" evidence="4">
    <location>
        <begin position="56"/>
        <end position="60"/>
    </location>
</feature>
<feature type="helix" evidence="4">
    <location>
        <begin position="62"/>
        <end position="66"/>
    </location>
</feature>
<feature type="strand" evidence="4">
    <location>
        <begin position="68"/>
        <end position="72"/>
    </location>
</feature>
<feature type="helix" evidence="4">
    <location>
        <begin position="78"/>
        <end position="80"/>
    </location>
</feature>
<feature type="helix" evidence="4">
    <location>
        <begin position="83"/>
        <end position="85"/>
    </location>
</feature>
<feature type="helix" evidence="4">
    <location>
        <begin position="86"/>
        <end position="89"/>
    </location>
</feature>
<feature type="strand" evidence="4">
    <location>
        <begin position="90"/>
        <end position="99"/>
    </location>
</feature>
<feature type="helix" evidence="4">
    <location>
        <begin position="101"/>
        <end position="103"/>
    </location>
</feature>
<feature type="helix" evidence="4">
    <location>
        <begin position="107"/>
        <end position="120"/>
    </location>
</feature>
<feature type="strand" evidence="4">
    <location>
        <begin position="124"/>
        <end position="127"/>
    </location>
</feature>
<feature type="strand" evidence="4">
    <location>
        <begin position="133"/>
        <end position="138"/>
    </location>
</feature>
<feature type="helix" evidence="4">
    <location>
        <begin position="140"/>
        <end position="142"/>
    </location>
</feature>
<feature type="helix" evidence="4">
    <location>
        <begin position="143"/>
        <end position="151"/>
    </location>
</feature>
<feature type="turn" evidence="4">
    <location>
        <begin position="152"/>
        <end position="154"/>
    </location>
</feature>
<feature type="strand" evidence="4">
    <location>
        <begin position="160"/>
        <end position="170"/>
    </location>
</feature>
<feature type="turn" evidence="4">
    <location>
        <begin position="172"/>
        <end position="176"/>
    </location>
</feature>
<feature type="helix" evidence="4">
    <location>
        <begin position="185"/>
        <end position="195"/>
    </location>
</feature>
<feature type="helix" evidence="4">
    <location>
        <begin position="199"/>
        <end position="201"/>
    </location>
</feature>
<feature type="strand" evidence="4">
    <location>
        <begin position="208"/>
        <end position="216"/>
    </location>
</feature>
<feature type="helix" evidence="4">
    <location>
        <begin position="220"/>
        <end position="222"/>
    </location>
</feature>
<feature type="strand" evidence="4">
    <location>
        <begin position="223"/>
        <end position="232"/>
    </location>
</feature>
<feature type="turn" evidence="4">
    <location>
        <begin position="233"/>
        <end position="235"/>
    </location>
</feature>
<feature type="strand" evidence="4">
    <location>
        <begin position="236"/>
        <end position="243"/>
    </location>
</feature>
<feature type="strand" evidence="4">
    <location>
        <begin position="248"/>
        <end position="250"/>
    </location>
</feature>
<feature type="strand" evidence="4">
    <location>
        <begin position="255"/>
        <end position="261"/>
    </location>
</feature>
<feature type="helix" evidence="4">
    <location>
        <begin position="263"/>
        <end position="265"/>
    </location>
</feature>
<feature type="helix" evidence="4">
    <location>
        <begin position="266"/>
        <end position="280"/>
    </location>
</feature>
<feature type="helix" evidence="4">
    <location>
        <begin position="286"/>
        <end position="288"/>
    </location>
</feature>
<feature type="helix" evidence="4">
    <location>
        <begin position="291"/>
        <end position="298"/>
    </location>
</feature>
<feature type="helix" evidence="4">
    <location>
        <begin position="300"/>
        <end position="310"/>
    </location>
</feature>
<feature type="strand" evidence="4">
    <location>
        <begin position="333"/>
        <end position="337"/>
    </location>
</feature>
<feature type="strand" evidence="4">
    <location>
        <begin position="340"/>
        <end position="347"/>
    </location>
</feature>
<feature type="strand" evidence="4">
    <location>
        <begin position="352"/>
        <end position="354"/>
    </location>
</feature>
<feature type="helix" evidence="4">
    <location>
        <begin position="355"/>
        <end position="368"/>
    </location>
</feature>
<feature type="strand" evidence="4">
    <location>
        <begin position="373"/>
        <end position="375"/>
    </location>
</feature>
<feature type="strand" evidence="4">
    <location>
        <begin position="381"/>
        <end position="386"/>
    </location>
</feature>
<feature type="helix" evidence="4">
    <location>
        <begin position="388"/>
        <end position="400"/>
    </location>
</feature>
<feature type="strand" evidence="4">
    <location>
        <begin position="404"/>
        <end position="406"/>
    </location>
</feature>
<feature type="helix" evidence="4">
    <location>
        <begin position="409"/>
        <end position="413"/>
    </location>
</feature>
<feature type="strand" evidence="4">
    <location>
        <begin position="414"/>
        <end position="416"/>
    </location>
</feature>
<feature type="helix" evidence="4">
    <location>
        <begin position="419"/>
        <end position="421"/>
    </location>
</feature>
<feature type="helix" evidence="4">
    <location>
        <begin position="431"/>
        <end position="444"/>
    </location>
</feature>
<feature type="helix" evidence="4">
    <location>
        <begin position="446"/>
        <end position="449"/>
    </location>
</feature>
<feature type="strand" evidence="4">
    <location>
        <begin position="458"/>
        <end position="463"/>
    </location>
</feature>
<feature type="helix" evidence="4">
    <location>
        <begin position="470"/>
        <end position="472"/>
    </location>
</feature>
<feature type="strand" evidence="4">
    <location>
        <begin position="473"/>
        <end position="487"/>
    </location>
</feature>
<feature type="strand" evidence="4">
    <location>
        <begin position="489"/>
        <end position="498"/>
    </location>
</feature>
<feature type="strand" evidence="5">
    <location>
        <begin position="500"/>
        <end position="502"/>
    </location>
</feature>
<feature type="turn" evidence="4">
    <location>
        <begin position="518"/>
        <end position="520"/>
    </location>
</feature>
<feature type="helix" evidence="4">
    <location>
        <begin position="521"/>
        <end position="534"/>
    </location>
</feature>
<feature type="helix" evidence="4">
    <location>
        <begin position="542"/>
        <end position="548"/>
    </location>
</feature>
<feature type="helix" evidence="4">
    <location>
        <begin position="551"/>
        <end position="554"/>
    </location>
</feature>
<accession>P9WJ03</accession>
<accession>L0T9H3</accession>
<accession>P71753</accession>
<accession>Q7D781</accession>
<keyword id="KW-0002">3D-structure</keyword>
<keyword id="KW-0004">4Fe-4S</keyword>
<keyword id="KW-0349">Heme</keyword>
<keyword id="KW-0408">Iron</keyword>
<keyword id="KW-0411">Iron-sulfur</keyword>
<keyword id="KW-0479">Metal-binding</keyword>
<keyword id="KW-0560">Oxidoreductase</keyword>
<keyword id="KW-1185">Reference proteome</keyword>
<keyword id="KW-0883">Thioether bond</keyword>
<name>SIR_MYCTU</name>
<evidence type="ECO:0000256" key="1">
    <source>
        <dbReference type="SAM" id="MobiDB-lite"/>
    </source>
</evidence>
<evidence type="ECO:0000269" key="2">
    <source>
    </source>
</evidence>
<evidence type="ECO:0000305" key="3"/>
<evidence type="ECO:0007829" key="4">
    <source>
        <dbReference type="PDB" id="1ZJ8"/>
    </source>
</evidence>
<evidence type="ECO:0007829" key="5">
    <source>
        <dbReference type="PDB" id="1ZJ9"/>
    </source>
</evidence>
<organism>
    <name type="scientific">Mycobacterium tuberculosis (strain ATCC 25618 / H37Rv)</name>
    <dbReference type="NCBI Taxonomy" id="83332"/>
    <lineage>
        <taxon>Bacteria</taxon>
        <taxon>Bacillati</taxon>
        <taxon>Actinomycetota</taxon>
        <taxon>Actinomycetes</taxon>
        <taxon>Mycobacteriales</taxon>
        <taxon>Mycobacteriaceae</taxon>
        <taxon>Mycobacterium</taxon>
        <taxon>Mycobacterium tuberculosis complex</taxon>
    </lineage>
</organism>
<sequence length="555" mass="62112">MTTARPAKARNEGQWALGHREPLNANEELKKAGNPLDVRERIENIYAKQGFDSIDKTDLRGRFRWWGLYTQREQGYDGTWTGDDNIDKLEAKYFMMRVRCDGGALSAAALRTLGQISTEFARDTADISDRQNVQYHWIEVENVPEIWRRLDDVGLQTTEACGDCPRVVLGSPLAGESLDEVLDPTWAIEEIVRRYIGKPDFADLPRKYKTAISGLQDVAHEINDVAFIGVNHPEHGPGLDLWVGGGLSTNPMLAQRVGAWVPLGEVPEVWAAVTSVFRDYGYRRLRAKARLKFLIKDWGIAKFREVLETEYLKRPLIDGPAPEPVKHPIDHVGVQRLKNGLNAVGVAPIAGRVSGTILTAVADLMARAGSDRIRFTPYQKLVILDIPDALLDDLIAGLDALGLQSRPSHWRRNLMACSGIEFCKLSFAETRVRAQHLVPELERRLEDINSQLDVPITVNINGCPNSCARIQIADIGFKGQMIDDGHGGSVEGFQVHLGGHLGLDAGFGRKLRQHKVTSDELGDYIDRVVRNFVKHRSEGERFAQWVIRAEEDDLR</sequence>
<reference key="1">
    <citation type="journal article" date="1998" name="Nature">
        <title>Deciphering the biology of Mycobacterium tuberculosis from the complete genome sequence.</title>
        <authorList>
            <person name="Cole S.T."/>
            <person name="Brosch R."/>
            <person name="Parkhill J."/>
            <person name="Garnier T."/>
            <person name="Churcher C.M."/>
            <person name="Harris D.E."/>
            <person name="Gordon S.V."/>
            <person name="Eiglmeier K."/>
            <person name="Gas S."/>
            <person name="Barry C.E. III"/>
            <person name="Tekaia F."/>
            <person name="Badcock K."/>
            <person name="Basham D."/>
            <person name="Brown D."/>
            <person name="Chillingworth T."/>
            <person name="Connor R."/>
            <person name="Davies R.M."/>
            <person name="Devlin K."/>
            <person name="Feltwell T."/>
            <person name="Gentles S."/>
            <person name="Hamlin N."/>
            <person name="Holroyd S."/>
            <person name="Hornsby T."/>
            <person name="Jagels K."/>
            <person name="Krogh A."/>
            <person name="McLean J."/>
            <person name="Moule S."/>
            <person name="Murphy L.D."/>
            <person name="Oliver S."/>
            <person name="Osborne J."/>
            <person name="Quail M.A."/>
            <person name="Rajandream M.A."/>
            <person name="Rogers J."/>
            <person name="Rutter S."/>
            <person name="Seeger K."/>
            <person name="Skelton S."/>
            <person name="Squares S."/>
            <person name="Squares R."/>
            <person name="Sulston J.E."/>
            <person name="Taylor K."/>
            <person name="Whitehead S."/>
            <person name="Barrell B.G."/>
        </authorList>
    </citation>
    <scope>NUCLEOTIDE SEQUENCE [LARGE SCALE GENOMIC DNA]</scope>
    <source>
        <strain>ATCC 25618 / H37Rv</strain>
    </source>
</reference>
<reference key="2">
    <citation type="journal article" date="2008" name="BMC Syst. Biol.">
        <title>targetTB: a target identification pipeline for Mycobacterium tuberculosis through an interactome, reactome and genome-scale structural analysis.</title>
        <authorList>
            <person name="Raman K."/>
            <person name="Yeturu K."/>
            <person name="Chandra N."/>
        </authorList>
    </citation>
    <scope>IDENTIFICATION AS A DRUG TARGET [LARGE SCALE ANALYSIS]</scope>
</reference>
<reference key="3">
    <citation type="journal article" date="2011" name="Mol. Cell. Proteomics">
        <title>Proteogenomic analysis of Mycobacterium tuberculosis by high resolution mass spectrometry.</title>
        <authorList>
            <person name="Kelkar D.S."/>
            <person name="Kumar D."/>
            <person name="Kumar P."/>
            <person name="Balakrishnan L."/>
            <person name="Muthusamy B."/>
            <person name="Yadav A.K."/>
            <person name="Shrivastava P."/>
            <person name="Marimuthu A."/>
            <person name="Anand S."/>
            <person name="Sundaram H."/>
            <person name="Kingsbury R."/>
            <person name="Harsha H.C."/>
            <person name="Nair B."/>
            <person name="Prasad T.S."/>
            <person name="Chauhan D.S."/>
            <person name="Katoch K."/>
            <person name="Katoch V.M."/>
            <person name="Kumar P."/>
            <person name="Chaerkady R."/>
            <person name="Ramachandran S."/>
            <person name="Dash D."/>
            <person name="Pandey A."/>
        </authorList>
    </citation>
    <scope>IDENTIFICATION BY MASS SPECTROMETRY [LARGE SCALE ANALYSIS]</scope>
    <source>
        <strain>ATCC 25618 / H37Rv</strain>
    </source>
</reference>
<reference key="4">
    <citation type="journal article" date="2005" name="J. Biol. Chem.">
        <title>Siroheme- and [Fe4-S4]-dependent NirA from Mycobacterium tuberculosis is a sulfite reductase with a covalent Cys-Tyr bond in the active site.</title>
        <authorList>
            <person name="Schnell R."/>
            <person name="Sandalova T."/>
            <person name="Hellman U."/>
            <person name="Lindqvist Y."/>
            <person name="Schneider G."/>
        </authorList>
    </citation>
    <scope>X-RAY CRYSTALLOGRAPHY (2.8 ANGSTROMS)</scope>
    <scope>FUNCTION</scope>
    <scope>CATALYTIC ACTIVITY</scope>
    <scope>COFACTOR</scope>
    <scope>SUBUNIT</scope>
    <scope>MUTAGENESIS OF TYR-69 AND CYS-161</scope>
    <source>
        <strain>ATCC 25618 / H37Rv</strain>
    </source>
</reference>
<gene>
    <name type="primary">sir</name>
    <name type="synonym">nirA</name>
    <name type="ordered locus">Rv2391</name>
</gene>
<dbReference type="EC" id="1.8.7.1" evidence="2"/>
<dbReference type="EMBL" id="AL123456">
    <property type="protein sequence ID" value="CCP45179.1"/>
    <property type="status" value="ALT_INIT"/>
    <property type="molecule type" value="Genomic_DNA"/>
</dbReference>
<dbReference type="PIR" id="B70682">
    <property type="entry name" value="B70682"/>
</dbReference>
<dbReference type="PDB" id="1ZJ8">
    <property type="method" value="X-ray"/>
    <property type="resolution" value="2.80 A"/>
    <property type="chains" value="A/B=3-555"/>
</dbReference>
<dbReference type="PDB" id="1ZJ9">
    <property type="method" value="X-ray"/>
    <property type="resolution" value="2.90 A"/>
    <property type="chains" value="A/B=3-555"/>
</dbReference>
<dbReference type="PDBsum" id="1ZJ8"/>
<dbReference type="PDBsum" id="1ZJ9"/>
<dbReference type="SMR" id="P9WJ03"/>
<dbReference type="FunCoup" id="P9WJ03">
    <property type="interactions" value="94"/>
</dbReference>
<dbReference type="STRING" id="83332.Rv2391"/>
<dbReference type="PaxDb" id="83332-Rv2391"/>
<dbReference type="DNASU" id="885472"/>
<dbReference type="KEGG" id="mtu:Rv2391"/>
<dbReference type="TubercuList" id="Rv2391"/>
<dbReference type="eggNOG" id="COG0155">
    <property type="taxonomic scope" value="Bacteria"/>
</dbReference>
<dbReference type="InParanoid" id="P9WJ03"/>
<dbReference type="OrthoDB" id="3189055at2"/>
<dbReference type="BRENDA" id="1.8.7.1">
    <property type="organism ID" value="3445"/>
</dbReference>
<dbReference type="Reactome" id="R-MTU-936721">
    <property type="pathway name" value="Cysteine synthesis from O-acetylserine"/>
</dbReference>
<dbReference type="EvolutionaryTrace" id="P9WJ03"/>
<dbReference type="Proteomes" id="UP000001584">
    <property type="component" value="Chromosome"/>
</dbReference>
<dbReference type="GO" id="GO:0005829">
    <property type="term" value="C:cytosol"/>
    <property type="evidence" value="ECO:0000304"/>
    <property type="project" value="Reactome"/>
</dbReference>
<dbReference type="GO" id="GO:0009274">
    <property type="term" value="C:peptidoglycan-based cell wall"/>
    <property type="evidence" value="ECO:0007005"/>
    <property type="project" value="MTBBASE"/>
</dbReference>
<dbReference type="GO" id="GO:0051539">
    <property type="term" value="F:4 iron, 4 sulfur cluster binding"/>
    <property type="evidence" value="ECO:0000314"/>
    <property type="project" value="MTBBASE"/>
</dbReference>
<dbReference type="GO" id="GO:0020037">
    <property type="term" value="F:heme binding"/>
    <property type="evidence" value="ECO:0007669"/>
    <property type="project" value="InterPro"/>
</dbReference>
<dbReference type="GO" id="GO:0046872">
    <property type="term" value="F:metal ion binding"/>
    <property type="evidence" value="ECO:0007669"/>
    <property type="project" value="UniProtKB-KW"/>
</dbReference>
<dbReference type="GO" id="GO:0050311">
    <property type="term" value="F:sulfite reductase (ferredoxin) activity"/>
    <property type="evidence" value="ECO:0007669"/>
    <property type="project" value="UniProtKB-EC"/>
</dbReference>
<dbReference type="GO" id="GO:0016002">
    <property type="term" value="F:sulfite reductase activity"/>
    <property type="evidence" value="ECO:0000314"/>
    <property type="project" value="MTBBASE"/>
</dbReference>
<dbReference type="GO" id="GO:0000103">
    <property type="term" value="P:sulfate assimilation"/>
    <property type="evidence" value="ECO:0000315"/>
    <property type="project" value="MTBBASE"/>
</dbReference>
<dbReference type="FunFam" id="3.30.413.10:FF:000009">
    <property type="entry name" value="Sulfite reductase [ferredoxin]"/>
    <property type="match status" value="1"/>
</dbReference>
<dbReference type="FunFam" id="3.30.413.10:FF:000013">
    <property type="entry name" value="Sulfite reductase [ferredoxin]"/>
    <property type="match status" value="1"/>
</dbReference>
<dbReference type="Gene3D" id="3.90.480.20">
    <property type="match status" value="1"/>
</dbReference>
<dbReference type="Gene3D" id="3.30.413.10">
    <property type="entry name" value="Sulfite Reductase Hemoprotein, domain 1"/>
    <property type="match status" value="2"/>
</dbReference>
<dbReference type="InterPro" id="IPR051329">
    <property type="entry name" value="NIR_SIR_4Fe-4S"/>
</dbReference>
<dbReference type="InterPro" id="IPR005117">
    <property type="entry name" value="NiRdtase/SiRdtase_haem-b_fer"/>
</dbReference>
<dbReference type="InterPro" id="IPR036136">
    <property type="entry name" value="Nit/Sulf_reduc_fer-like_dom_sf"/>
</dbReference>
<dbReference type="InterPro" id="IPR006067">
    <property type="entry name" value="NO2/SO3_Rdtase_4Fe4S_dom"/>
</dbReference>
<dbReference type="InterPro" id="IPR045854">
    <property type="entry name" value="NO2/SO3_Rdtase_4Fe4S_sf"/>
</dbReference>
<dbReference type="InterPro" id="IPR006066">
    <property type="entry name" value="NO2/SO3_Rdtase_FeS/sirohaem_BS"/>
</dbReference>
<dbReference type="PANTHER" id="PTHR32439">
    <property type="entry name" value="FERREDOXIN--NITRITE REDUCTASE, CHLOROPLASTIC"/>
    <property type="match status" value="1"/>
</dbReference>
<dbReference type="PANTHER" id="PTHR32439:SF0">
    <property type="entry name" value="FERREDOXIN--NITRITE REDUCTASE, CHLOROPLASTIC"/>
    <property type="match status" value="1"/>
</dbReference>
<dbReference type="Pfam" id="PF01077">
    <property type="entry name" value="NIR_SIR"/>
    <property type="match status" value="2"/>
</dbReference>
<dbReference type="Pfam" id="PF03460">
    <property type="entry name" value="NIR_SIR_ferr"/>
    <property type="match status" value="2"/>
</dbReference>
<dbReference type="PRINTS" id="PR00397">
    <property type="entry name" value="SIROHAEM"/>
</dbReference>
<dbReference type="SUPFAM" id="SSF56014">
    <property type="entry name" value="Nitrite and sulphite reductase 4Fe-4S domain-like"/>
    <property type="match status" value="2"/>
</dbReference>
<dbReference type="SUPFAM" id="SSF55124">
    <property type="entry name" value="Nitrite/Sulfite reductase N-terminal domain-like"/>
    <property type="match status" value="2"/>
</dbReference>
<dbReference type="PROSITE" id="PS00365">
    <property type="entry name" value="NIR_SIR"/>
    <property type="match status" value="1"/>
</dbReference>